<sequence>MQHTMSFRIFLRRYATKHDLSKVRNIGIIAHIDAGKTTTTERMLYYSGKINRIGDVDQGDTITDYLPQERSRGITIQSAAISFNWKKDYKINLIDTPGHADFTFEVIRSLKVLDSCVTILDSVAGVEAQTEKVWKQSSGLPKICFLNKMDRVGAGFSRTVKELVVKMNTRALLINTPIFQVDPVTNESKFSGVLDLIYGKQLIWDTNDPDKINVTDVDENHDCYEYLVRGREALVETLGETDESIVEHFFNDADGEYLNVSPEVLNASIRKATISLSATPVLCGASFRNIGVQPLLDAIANYLPSPSEARPPELNHKNVPITQNPLTGLVLNKNPNLCVALAFKVITDAIRGTMIFIRVYSGVLRSNHTVYNTTTGTKFKIGKLVRMHANVPEEVNELYPGDIGVLTGSNVSEHIRTGDTIVTHVTKKDGLRSFDKNVELTLKINPIEIPPPVFNAAIEPKTLGNKKPMEQALSQLTREDPSLVVTHDEETGQTLLSGMGELHLDIARDRLLNELNAQVDVERVIVSYKETLNHSTQEKTLETDDGYKITAVIEPLDEEMKAKAKKDEEWFSLANDNNFMIMEKHTKYDPDKNWPFQVPYVAVVNALLPSSLVALQRGGKIGGFPLSSCVIRIKNDWDLPIDAPSISPLLTLSRQLFTQILLGEDQSNYSVLEPVMNVDVTVQQQDMGPVIQDLSSARKANILSIEDENTNTVSESNIRFQHIADKMWLPEDPTLEFAKLGKEGQAPKMVKAQAPLKEMVAYNNKIRSITQGRGSFNMYYHGMQPVTHDRLQSVLADYHQ</sequence>
<reference key="1">
    <citation type="journal article" date="2004" name="Nature">
        <title>Genome evolution in yeasts.</title>
        <authorList>
            <person name="Dujon B."/>
            <person name="Sherman D."/>
            <person name="Fischer G."/>
            <person name="Durrens P."/>
            <person name="Casaregola S."/>
            <person name="Lafontaine I."/>
            <person name="de Montigny J."/>
            <person name="Marck C."/>
            <person name="Neuveglise C."/>
            <person name="Talla E."/>
            <person name="Goffard N."/>
            <person name="Frangeul L."/>
            <person name="Aigle M."/>
            <person name="Anthouard V."/>
            <person name="Babour A."/>
            <person name="Barbe V."/>
            <person name="Barnay S."/>
            <person name="Blanchin S."/>
            <person name="Beckerich J.-M."/>
            <person name="Beyne E."/>
            <person name="Bleykasten C."/>
            <person name="Boisrame A."/>
            <person name="Boyer J."/>
            <person name="Cattolico L."/>
            <person name="Confanioleri F."/>
            <person name="de Daruvar A."/>
            <person name="Despons L."/>
            <person name="Fabre E."/>
            <person name="Fairhead C."/>
            <person name="Ferry-Dumazet H."/>
            <person name="Groppi A."/>
            <person name="Hantraye F."/>
            <person name="Hennequin C."/>
            <person name="Jauniaux N."/>
            <person name="Joyet P."/>
            <person name="Kachouri R."/>
            <person name="Kerrest A."/>
            <person name="Koszul R."/>
            <person name="Lemaire M."/>
            <person name="Lesur I."/>
            <person name="Ma L."/>
            <person name="Muller H."/>
            <person name="Nicaud J.-M."/>
            <person name="Nikolski M."/>
            <person name="Oztas S."/>
            <person name="Ozier-Kalogeropoulos O."/>
            <person name="Pellenz S."/>
            <person name="Potier S."/>
            <person name="Richard G.-F."/>
            <person name="Straub M.-L."/>
            <person name="Suleau A."/>
            <person name="Swennen D."/>
            <person name="Tekaia F."/>
            <person name="Wesolowski-Louvel M."/>
            <person name="Westhof E."/>
            <person name="Wirth B."/>
            <person name="Zeniou-Meyer M."/>
            <person name="Zivanovic Y."/>
            <person name="Bolotin-Fukuhara M."/>
            <person name="Thierry A."/>
            <person name="Bouchier C."/>
            <person name="Caudron B."/>
            <person name="Scarpelli C."/>
            <person name="Gaillardin C."/>
            <person name="Weissenbach J."/>
            <person name="Wincker P."/>
            <person name="Souciet J.-L."/>
        </authorList>
    </citation>
    <scope>NUCLEOTIDE SEQUENCE [LARGE SCALE GENOMIC DNA]</scope>
    <source>
        <strain>ATCC 8585 / CBS 2359 / DSM 70799 / NBRC 1267 / NRRL Y-1140 / WM37</strain>
    </source>
</reference>
<protein>
    <recommendedName>
        <fullName evidence="1">Ribosome-releasing factor 2, mitochondrial</fullName>
        <shortName evidence="1">RRF2mt</shortName>
    </recommendedName>
    <alternativeName>
        <fullName evidence="1">Elongation factor G 2, mitochondrial</fullName>
        <shortName evidence="1">EF-G2mt</shortName>
        <shortName evidence="1">mEF-G 2</shortName>
    </alternativeName>
</protein>
<feature type="chain" id="PRO_0000385616" description="Ribosome-releasing factor 2, mitochondrial">
    <location>
        <begin position="1"/>
        <end position="800"/>
    </location>
</feature>
<feature type="domain" description="tr-type G">
    <location>
        <begin position="21"/>
        <end position="307"/>
    </location>
</feature>
<feature type="binding site" evidence="1">
    <location>
        <begin position="30"/>
        <end position="37"/>
    </location>
    <ligand>
        <name>GTP</name>
        <dbReference type="ChEBI" id="CHEBI:37565"/>
    </ligand>
</feature>
<feature type="binding site" evidence="1">
    <location>
        <begin position="95"/>
        <end position="99"/>
    </location>
    <ligand>
        <name>GTP</name>
        <dbReference type="ChEBI" id="CHEBI:37565"/>
    </ligand>
</feature>
<feature type="binding site" evidence="1">
    <location>
        <begin position="147"/>
        <end position="150"/>
    </location>
    <ligand>
        <name>GTP</name>
        <dbReference type="ChEBI" id="CHEBI:37565"/>
    </ligand>
</feature>
<proteinExistence type="inferred from homology"/>
<keyword id="KW-0342">GTP-binding</keyword>
<keyword id="KW-0496">Mitochondrion</keyword>
<keyword id="KW-0547">Nucleotide-binding</keyword>
<keyword id="KW-0648">Protein biosynthesis</keyword>
<keyword id="KW-1185">Reference proteome</keyword>
<name>RRF2M_KLULA</name>
<accession>Q6CK29</accession>
<comment type="function">
    <text evidence="1">Mitochondrial GTPase that mediates the disassembly of ribosomes from messenger RNA at the termination of mitochondrial protein biosynthesis. Not involved in the GTP-dependent ribosomal translocation step during translation elongation.</text>
</comment>
<comment type="subcellular location">
    <subcellularLocation>
        <location evidence="1">Mitochondrion</location>
    </subcellularLocation>
</comment>
<comment type="miscellaneous">
    <text evidence="1">This protein may be expected to contain an N-terminal transit peptide but none has been predicted.</text>
</comment>
<comment type="similarity">
    <text evidence="1">Belongs to the TRAFAC class translation factor GTPase superfamily. Classic translation factor GTPase family. EF-G/EF-2 subfamily.</text>
</comment>
<gene>
    <name evidence="1" type="primary">MEF2</name>
    <name type="ordered locus">KLLA0F13992g</name>
</gene>
<dbReference type="EMBL" id="CR382126">
    <property type="protein sequence ID" value="CAG98418.1"/>
    <property type="molecule type" value="Genomic_DNA"/>
</dbReference>
<dbReference type="RefSeq" id="XP_455710.1">
    <property type="nucleotide sequence ID" value="XM_455710.1"/>
</dbReference>
<dbReference type="SMR" id="Q6CK29"/>
<dbReference type="FunCoup" id="Q6CK29">
    <property type="interactions" value="627"/>
</dbReference>
<dbReference type="STRING" id="284590.Q6CK29"/>
<dbReference type="PaxDb" id="284590-Q6CK29"/>
<dbReference type="KEGG" id="kla:KLLA0_F13992g"/>
<dbReference type="eggNOG" id="KOG0465">
    <property type="taxonomic scope" value="Eukaryota"/>
</dbReference>
<dbReference type="HOGENOM" id="CLU_002794_4_1_1"/>
<dbReference type="InParanoid" id="Q6CK29"/>
<dbReference type="OMA" id="GPQFTFP"/>
<dbReference type="Proteomes" id="UP000000598">
    <property type="component" value="Chromosome F"/>
</dbReference>
<dbReference type="GO" id="GO:0005739">
    <property type="term" value="C:mitochondrion"/>
    <property type="evidence" value="ECO:0007669"/>
    <property type="project" value="UniProtKB-SubCell"/>
</dbReference>
<dbReference type="GO" id="GO:0005525">
    <property type="term" value="F:GTP binding"/>
    <property type="evidence" value="ECO:0007669"/>
    <property type="project" value="UniProtKB-UniRule"/>
</dbReference>
<dbReference type="GO" id="GO:0003924">
    <property type="term" value="F:GTPase activity"/>
    <property type="evidence" value="ECO:0007669"/>
    <property type="project" value="UniProtKB-UniRule"/>
</dbReference>
<dbReference type="GO" id="GO:0032543">
    <property type="term" value="P:mitochondrial translation"/>
    <property type="evidence" value="ECO:0007669"/>
    <property type="project" value="UniProtKB-UniRule"/>
</dbReference>
<dbReference type="GO" id="GO:0032790">
    <property type="term" value="P:ribosome disassembly"/>
    <property type="evidence" value="ECO:0007669"/>
    <property type="project" value="UniProtKB-UniRule"/>
</dbReference>
<dbReference type="CDD" id="cd01886">
    <property type="entry name" value="EF-G"/>
    <property type="match status" value="1"/>
</dbReference>
<dbReference type="CDD" id="cd16262">
    <property type="entry name" value="EFG_III"/>
    <property type="match status" value="1"/>
</dbReference>
<dbReference type="CDD" id="cd03713">
    <property type="entry name" value="EFG_mtEFG_C"/>
    <property type="match status" value="1"/>
</dbReference>
<dbReference type="CDD" id="cd04092">
    <property type="entry name" value="mtEFG2_II_like"/>
    <property type="match status" value="1"/>
</dbReference>
<dbReference type="FunFam" id="3.40.50.300:FF:001636">
    <property type="entry name" value="Ribosome-releasing factor 2, mitochondrial"/>
    <property type="match status" value="1"/>
</dbReference>
<dbReference type="Gene3D" id="3.30.70.240">
    <property type="match status" value="1"/>
</dbReference>
<dbReference type="Gene3D" id="3.30.70.870">
    <property type="entry name" value="Elongation Factor G (Translational Gtpase), domain 3"/>
    <property type="match status" value="1"/>
</dbReference>
<dbReference type="Gene3D" id="3.40.50.300">
    <property type="entry name" value="P-loop containing nucleotide triphosphate hydrolases"/>
    <property type="match status" value="1"/>
</dbReference>
<dbReference type="Gene3D" id="2.40.30.10">
    <property type="entry name" value="Translation factors"/>
    <property type="match status" value="1"/>
</dbReference>
<dbReference type="HAMAP" id="MF_03059">
    <property type="entry name" value="mEF_G_2"/>
    <property type="match status" value="1"/>
</dbReference>
<dbReference type="InterPro" id="IPR030851">
    <property type="entry name" value="EFG2"/>
</dbReference>
<dbReference type="InterPro" id="IPR041095">
    <property type="entry name" value="EFG_II"/>
</dbReference>
<dbReference type="InterPro" id="IPR009022">
    <property type="entry name" value="EFG_III"/>
</dbReference>
<dbReference type="InterPro" id="IPR035647">
    <property type="entry name" value="EFG_III/V"/>
</dbReference>
<dbReference type="InterPro" id="IPR035649">
    <property type="entry name" value="EFG_V"/>
</dbReference>
<dbReference type="InterPro" id="IPR000640">
    <property type="entry name" value="EFG_V-like"/>
</dbReference>
<dbReference type="InterPro" id="IPR004161">
    <property type="entry name" value="EFTu-like_2"/>
</dbReference>
<dbReference type="InterPro" id="IPR031157">
    <property type="entry name" value="G_TR_CS"/>
</dbReference>
<dbReference type="InterPro" id="IPR027417">
    <property type="entry name" value="P-loop_NTPase"/>
</dbReference>
<dbReference type="InterPro" id="IPR005225">
    <property type="entry name" value="Small_GTP-bd"/>
</dbReference>
<dbReference type="InterPro" id="IPR000795">
    <property type="entry name" value="T_Tr_GTP-bd_dom"/>
</dbReference>
<dbReference type="InterPro" id="IPR009000">
    <property type="entry name" value="Transl_B-barrel_sf"/>
</dbReference>
<dbReference type="NCBIfam" id="TIGR00231">
    <property type="entry name" value="small_GTP"/>
    <property type="match status" value="1"/>
</dbReference>
<dbReference type="PANTHER" id="PTHR43261:SF1">
    <property type="entry name" value="RIBOSOME-RELEASING FACTOR 2, MITOCHONDRIAL"/>
    <property type="match status" value="1"/>
</dbReference>
<dbReference type="PANTHER" id="PTHR43261">
    <property type="entry name" value="TRANSLATION ELONGATION FACTOR G-RELATED"/>
    <property type="match status" value="1"/>
</dbReference>
<dbReference type="Pfam" id="PF00679">
    <property type="entry name" value="EFG_C"/>
    <property type="match status" value="1"/>
</dbReference>
<dbReference type="Pfam" id="PF14492">
    <property type="entry name" value="EFG_III"/>
    <property type="match status" value="1"/>
</dbReference>
<dbReference type="Pfam" id="PF00009">
    <property type="entry name" value="GTP_EFTU"/>
    <property type="match status" value="1"/>
</dbReference>
<dbReference type="Pfam" id="PF03144">
    <property type="entry name" value="GTP_EFTU_D2"/>
    <property type="match status" value="1"/>
</dbReference>
<dbReference type="PRINTS" id="PR00315">
    <property type="entry name" value="ELONGATNFCT"/>
</dbReference>
<dbReference type="SMART" id="SM00838">
    <property type="entry name" value="EFG_C"/>
    <property type="match status" value="1"/>
</dbReference>
<dbReference type="SUPFAM" id="SSF54980">
    <property type="entry name" value="EF-G C-terminal domain-like"/>
    <property type="match status" value="2"/>
</dbReference>
<dbReference type="SUPFAM" id="SSF52540">
    <property type="entry name" value="P-loop containing nucleoside triphosphate hydrolases"/>
    <property type="match status" value="1"/>
</dbReference>
<dbReference type="SUPFAM" id="SSF50447">
    <property type="entry name" value="Translation proteins"/>
    <property type="match status" value="1"/>
</dbReference>
<dbReference type="PROSITE" id="PS00301">
    <property type="entry name" value="G_TR_1"/>
    <property type="match status" value="1"/>
</dbReference>
<dbReference type="PROSITE" id="PS51722">
    <property type="entry name" value="G_TR_2"/>
    <property type="match status" value="1"/>
</dbReference>
<evidence type="ECO:0000255" key="1">
    <source>
        <dbReference type="HAMAP-Rule" id="MF_03059"/>
    </source>
</evidence>
<organism>
    <name type="scientific">Kluyveromyces lactis (strain ATCC 8585 / CBS 2359 / DSM 70799 / NBRC 1267 / NRRL Y-1140 / WM37)</name>
    <name type="common">Yeast</name>
    <name type="synonym">Candida sphaerica</name>
    <dbReference type="NCBI Taxonomy" id="284590"/>
    <lineage>
        <taxon>Eukaryota</taxon>
        <taxon>Fungi</taxon>
        <taxon>Dikarya</taxon>
        <taxon>Ascomycota</taxon>
        <taxon>Saccharomycotina</taxon>
        <taxon>Saccharomycetes</taxon>
        <taxon>Saccharomycetales</taxon>
        <taxon>Saccharomycetaceae</taxon>
        <taxon>Kluyveromyces</taxon>
    </lineage>
</organism>